<organism>
    <name type="scientific">Solanum tuberosum</name>
    <name type="common">Potato</name>
    <dbReference type="NCBI Taxonomy" id="4113"/>
    <lineage>
        <taxon>Eukaryota</taxon>
        <taxon>Viridiplantae</taxon>
        <taxon>Streptophyta</taxon>
        <taxon>Embryophyta</taxon>
        <taxon>Tracheophyta</taxon>
        <taxon>Spermatophyta</taxon>
        <taxon>Magnoliopsida</taxon>
        <taxon>eudicotyledons</taxon>
        <taxon>Gunneridae</taxon>
        <taxon>Pentapetalae</taxon>
        <taxon>asterids</taxon>
        <taxon>lamiids</taxon>
        <taxon>Solanales</taxon>
        <taxon>Solanaceae</taxon>
        <taxon>Solanoideae</taxon>
        <taxon>Solaneae</taxon>
        <taxon>Solanum</taxon>
    </lineage>
</organism>
<evidence type="ECO:0000255" key="1">
    <source>
        <dbReference type="HAMAP-Rule" id="MF_01357"/>
    </source>
</evidence>
<name>NDHJ_SOLTU</name>
<dbReference type="EC" id="7.1.1.-" evidence="1"/>
<dbReference type="EMBL" id="DQ231562">
    <property type="protein sequence ID" value="ABB90044.1"/>
    <property type="molecule type" value="Genomic_DNA"/>
</dbReference>
<dbReference type="EMBL" id="DQ386163">
    <property type="protein sequence ID" value="ABD47060.1"/>
    <property type="molecule type" value="Genomic_DNA"/>
</dbReference>
<dbReference type="RefSeq" id="YP_635642.1">
    <property type="nucleotide sequence ID" value="NC_008096.2"/>
</dbReference>
<dbReference type="SMR" id="Q2VEH4"/>
<dbReference type="FunCoup" id="Q2VEH4">
    <property type="interactions" value="34"/>
</dbReference>
<dbReference type="STRING" id="4113.Q2VEH4"/>
<dbReference type="PaxDb" id="4113-PGSC0003DMT400006828"/>
<dbReference type="GeneID" id="4099977"/>
<dbReference type="KEGG" id="sot:4099977"/>
<dbReference type="eggNOG" id="KOG1713">
    <property type="taxonomic scope" value="Eukaryota"/>
</dbReference>
<dbReference type="InParanoid" id="Q2VEH4"/>
<dbReference type="OrthoDB" id="1243565at2759"/>
<dbReference type="Proteomes" id="UP000011115">
    <property type="component" value="Unassembled WGS sequence"/>
</dbReference>
<dbReference type="GO" id="GO:0009535">
    <property type="term" value="C:chloroplast thylakoid membrane"/>
    <property type="evidence" value="ECO:0007669"/>
    <property type="project" value="UniProtKB-SubCell"/>
</dbReference>
<dbReference type="GO" id="GO:0008137">
    <property type="term" value="F:NADH dehydrogenase (ubiquinone) activity"/>
    <property type="evidence" value="ECO:0007669"/>
    <property type="project" value="InterPro"/>
</dbReference>
<dbReference type="GO" id="GO:0048038">
    <property type="term" value="F:quinone binding"/>
    <property type="evidence" value="ECO:0007669"/>
    <property type="project" value="UniProtKB-KW"/>
</dbReference>
<dbReference type="GO" id="GO:0019684">
    <property type="term" value="P:photosynthesis, light reaction"/>
    <property type="evidence" value="ECO:0007669"/>
    <property type="project" value="UniProtKB-UniRule"/>
</dbReference>
<dbReference type="FunFam" id="3.30.460.80:FF:000004">
    <property type="entry name" value="NAD(P)H-quinone oxidoreductase subunit J, chloroplastic"/>
    <property type="match status" value="1"/>
</dbReference>
<dbReference type="Gene3D" id="3.30.460.80">
    <property type="entry name" value="NADH:ubiquinone oxidoreductase, 30kDa subunit"/>
    <property type="match status" value="1"/>
</dbReference>
<dbReference type="HAMAP" id="MF_01357">
    <property type="entry name" value="NDH1_NuoC"/>
    <property type="match status" value="1"/>
</dbReference>
<dbReference type="InterPro" id="IPR010218">
    <property type="entry name" value="NADH_DH_suC"/>
</dbReference>
<dbReference type="InterPro" id="IPR037232">
    <property type="entry name" value="NADH_quin_OxRdtase_su_C/D-like"/>
</dbReference>
<dbReference type="InterPro" id="IPR001268">
    <property type="entry name" value="NADH_UbQ_OxRdtase_30kDa_su"/>
</dbReference>
<dbReference type="InterPro" id="IPR020396">
    <property type="entry name" value="NADH_UbQ_OxRdtase_CS"/>
</dbReference>
<dbReference type="NCBIfam" id="NF009141">
    <property type="entry name" value="PRK12494.1"/>
    <property type="match status" value="1"/>
</dbReference>
<dbReference type="PANTHER" id="PTHR10884:SF14">
    <property type="entry name" value="NADH DEHYDROGENASE [UBIQUINONE] IRON-SULFUR PROTEIN 3, MITOCHONDRIAL"/>
    <property type="match status" value="1"/>
</dbReference>
<dbReference type="PANTHER" id="PTHR10884">
    <property type="entry name" value="NADH DEHYDROGENASE UBIQUINONE IRON-SULFUR PROTEIN 3"/>
    <property type="match status" value="1"/>
</dbReference>
<dbReference type="Pfam" id="PF00329">
    <property type="entry name" value="Complex1_30kDa"/>
    <property type="match status" value="1"/>
</dbReference>
<dbReference type="SUPFAM" id="SSF143243">
    <property type="entry name" value="Nqo5-like"/>
    <property type="match status" value="1"/>
</dbReference>
<dbReference type="PROSITE" id="PS00542">
    <property type="entry name" value="COMPLEX1_30K"/>
    <property type="match status" value="1"/>
</dbReference>
<feature type="chain" id="PRO_0000277563" description="NAD(P)H-quinone oxidoreductase subunit J, chloroplastic">
    <location>
        <begin position="1"/>
        <end position="158"/>
    </location>
</feature>
<keyword id="KW-0150">Chloroplast</keyword>
<keyword id="KW-0472">Membrane</keyword>
<keyword id="KW-0520">NAD</keyword>
<keyword id="KW-0521">NADP</keyword>
<keyword id="KW-0934">Plastid</keyword>
<keyword id="KW-0618">Plastoquinone</keyword>
<keyword id="KW-0874">Quinone</keyword>
<keyword id="KW-1185">Reference proteome</keyword>
<keyword id="KW-0793">Thylakoid</keyword>
<keyword id="KW-1278">Translocase</keyword>
<keyword id="KW-0813">Transport</keyword>
<reference key="1">
    <citation type="journal article" date="2006" name="Plant Cell Rep.">
        <title>The complete chloroplast genome sequences of Solanum tuberosum and comparative analysis with Solanaceae species identified the presence of a 241-bp deletion in cultivated potato chloroplast DNA sequence.</title>
        <authorList>
            <person name="Chung H.-J."/>
            <person name="Jung J.D."/>
            <person name="Park H.-W."/>
            <person name="Kim J.-H."/>
            <person name="Cha H.W."/>
            <person name="Min S.R."/>
            <person name="Jeong W.-J."/>
            <person name="Liu J.R."/>
        </authorList>
    </citation>
    <scope>NUCLEOTIDE SEQUENCE [LARGE SCALE GENOMIC DNA]</scope>
    <source>
        <strain>cv. Desiree</strain>
    </source>
</reference>
<reference key="2">
    <citation type="submission" date="2006-02" db="EMBL/GenBank/DDBJ databases">
        <title>Complete chloroplast genome sequences of Solanum tuberosum cultivar Desiree and comparative analyses with other Solanaceae genomes.</title>
        <authorList>
            <person name="Gargano D."/>
            <person name="Scotti N."/>
            <person name="Vezzi A."/>
            <person name="Bilardi A."/>
            <person name="Valle G."/>
            <person name="Grillo S."/>
            <person name="Cardi T."/>
        </authorList>
    </citation>
    <scope>NUCLEOTIDE SEQUENCE [LARGE SCALE GENOMIC DNA]</scope>
    <source>
        <strain>cv. Desiree</strain>
    </source>
</reference>
<proteinExistence type="inferred from homology"/>
<protein>
    <recommendedName>
        <fullName evidence="1">NAD(P)H-quinone oxidoreductase subunit J, chloroplastic</fullName>
        <ecNumber evidence="1">7.1.1.-</ecNumber>
    </recommendedName>
    <alternativeName>
        <fullName>NAD(P)H dehydrogenase subunit J</fullName>
    </alternativeName>
    <alternativeName>
        <fullName evidence="1">NADH-plastoquinone oxidoreductase subunit J</fullName>
    </alternativeName>
</protein>
<sequence length="158" mass="18667">MQGRLSAWLVKHGLIHRSLGFDYQGIETLQIKPEDWHSIAVIFYVYGYNYLRSQCAYDVAPGGLLASVYHLTRIEDDVDQPEELCIKVFASRRNPRIPSVFWVWKSVDFQERESYDMLGISYDNHPRLKRILMPESWIGWPLRKDYIAPNFYEIQDAH</sequence>
<accession>Q2VEH4</accession>
<geneLocation type="chloroplast"/>
<comment type="function">
    <text evidence="1">NDH shuttles electrons from NAD(P)H:plastoquinone, via FMN and iron-sulfur (Fe-S) centers, to quinones in the photosynthetic chain and possibly in a chloroplast respiratory chain. The immediate electron acceptor for the enzyme in this species is believed to be plastoquinone. Couples the redox reaction to proton translocation, and thus conserves the redox energy in a proton gradient.</text>
</comment>
<comment type="catalytic activity">
    <reaction evidence="1">
        <text>a plastoquinone + NADH + (n+1) H(+)(in) = a plastoquinol + NAD(+) + n H(+)(out)</text>
        <dbReference type="Rhea" id="RHEA:42608"/>
        <dbReference type="Rhea" id="RHEA-COMP:9561"/>
        <dbReference type="Rhea" id="RHEA-COMP:9562"/>
        <dbReference type="ChEBI" id="CHEBI:15378"/>
        <dbReference type="ChEBI" id="CHEBI:17757"/>
        <dbReference type="ChEBI" id="CHEBI:57540"/>
        <dbReference type="ChEBI" id="CHEBI:57945"/>
        <dbReference type="ChEBI" id="CHEBI:62192"/>
    </reaction>
</comment>
<comment type="catalytic activity">
    <reaction evidence="1">
        <text>a plastoquinone + NADPH + (n+1) H(+)(in) = a plastoquinol + NADP(+) + n H(+)(out)</text>
        <dbReference type="Rhea" id="RHEA:42612"/>
        <dbReference type="Rhea" id="RHEA-COMP:9561"/>
        <dbReference type="Rhea" id="RHEA-COMP:9562"/>
        <dbReference type="ChEBI" id="CHEBI:15378"/>
        <dbReference type="ChEBI" id="CHEBI:17757"/>
        <dbReference type="ChEBI" id="CHEBI:57783"/>
        <dbReference type="ChEBI" id="CHEBI:58349"/>
        <dbReference type="ChEBI" id="CHEBI:62192"/>
    </reaction>
</comment>
<comment type="subunit">
    <text evidence="1">NDH is composed of at least 16 different subunits, 5 of which are encoded in the nucleus.</text>
</comment>
<comment type="subcellular location">
    <subcellularLocation>
        <location evidence="1">Plastid</location>
        <location evidence="1">Chloroplast thylakoid membrane</location>
        <topology evidence="1">Peripheral membrane protein</topology>
        <orientation evidence="1">Stromal side</orientation>
    </subcellularLocation>
</comment>
<comment type="similarity">
    <text evidence="1">Belongs to the complex I 30 kDa subunit family.</text>
</comment>
<gene>
    <name evidence="1" type="primary">ndhJ</name>
</gene>